<keyword id="KW-0496">Mitochondrion</keyword>
<keyword id="KW-1185">Reference proteome</keyword>
<keyword id="KW-0677">Repeat</keyword>
<keyword id="KW-0819">tRNA processing</keyword>
<organism>
    <name type="scientific">Pongo abelii</name>
    <name type="common">Sumatran orangutan</name>
    <name type="synonym">Pongo pygmaeus abelii</name>
    <dbReference type="NCBI Taxonomy" id="9601"/>
    <lineage>
        <taxon>Eukaryota</taxon>
        <taxon>Metazoa</taxon>
        <taxon>Chordata</taxon>
        <taxon>Craniata</taxon>
        <taxon>Vertebrata</taxon>
        <taxon>Euteleostomi</taxon>
        <taxon>Mammalia</taxon>
        <taxon>Eutheria</taxon>
        <taxon>Euarchontoglires</taxon>
        <taxon>Primates</taxon>
        <taxon>Haplorrhini</taxon>
        <taxon>Catarrhini</taxon>
        <taxon>Hominidae</taxon>
        <taxon>Pongo</taxon>
    </lineage>
</organism>
<name>PTCD1_PONAB</name>
<evidence type="ECO:0000250" key="1"/>
<evidence type="ECO:0000256" key="2">
    <source>
        <dbReference type="SAM" id="MobiDB-lite"/>
    </source>
</evidence>
<evidence type="ECO:0000305" key="3"/>
<comment type="function">
    <text evidence="1">Mitochondrial protein implicated in negative regulation of leucine tRNA levels, as well as negative regulation of mitochondria-encoded proteins and COX activity. Also affects the 3'-processing of mitochondrial tRNAs.</text>
</comment>
<comment type="subunit">
    <text evidence="1">Associates with mitochondrial leucine tRNAs. Interacts with ELAC2.</text>
</comment>
<comment type="subcellular location">
    <subcellularLocation>
        <location evidence="1">Mitochondrion</location>
    </subcellularLocation>
    <subcellularLocation>
        <location evidence="1">Mitochondrion matrix</location>
    </subcellularLocation>
</comment>
<comment type="similarity">
    <text evidence="3">Belongs to the PTCD1 family.</text>
</comment>
<dbReference type="EMBL" id="CR860641">
    <property type="protein sequence ID" value="CAH92761.1"/>
    <property type="molecule type" value="mRNA"/>
</dbReference>
<dbReference type="RefSeq" id="NP_001127583.1">
    <property type="nucleotide sequence ID" value="NM_001134111.1"/>
</dbReference>
<dbReference type="SMR" id="Q5R655"/>
<dbReference type="FunCoup" id="Q5R655">
    <property type="interactions" value="2001"/>
</dbReference>
<dbReference type="STRING" id="9601.ENSPPYP00000019470"/>
<dbReference type="GeneID" id="100174661"/>
<dbReference type="KEGG" id="pon:100174661"/>
<dbReference type="CTD" id="26024"/>
<dbReference type="eggNOG" id="KOG4197">
    <property type="taxonomic scope" value="Eukaryota"/>
</dbReference>
<dbReference type="InParanoid" id="Q5R655"/>
<dbReference type="OrthoDB" id="185373at2759"/>
<dbReference type="Proteomes" id="UP000001595">
    <property type="component" value="Unplaced"/>
</dbReference>
<dbReference type="GO" id="GO:0005759">
    <property type="term" value="C:mitochondrial matrix"/>
    <property type="evidence" value="ECO:0000250"/>
    <property type="project" value="UniProtKB"/>
</dbReference>
<dbReference type="GO" id="GO:0000049">
    <property type="term" value="F:tRNA binding"/>
    <property type="evidence" value="ECO:0000250"/>
    <property type="project" value="UniProtKB"/>
</dbReference>
<dbReference type="GO" id="GO:0042780">
    <property type="term" value="P:tRNA 3'-end processing"/>
    <property type="evidence" value="ECO:0000250"/>
    <property type="project" value="UniProtKB"/>
</dbReference>
<dbReference type="FunFam" id="1.25.40.10:FF:000408">
    <property type="entry name" value="Pentatricopeptide repeat domain 1"/>
    <property type="match status" value="1"/>
</dbReference>
<dbReference type="FunFam" id="1.25.40.10:FF:000255">
    <property type="entry name" value="Pentatricopeptide repeat-containing protein 1, mitochondrial"/>
    <property type="match status" value="1"/>
</dbReference>
<dbReference type="FunFam" id="1.25.40.10:FF:000321">
    <property type="entry name" value="pentatricopeptide repeat-containing protein 1, mitochondrial isoform X1"/>
    <property type="match status" value="1"/>
</dbReference>
<dbReference type="Gene3D" id="1.25.40.10">
    <property type="entry name" value="Tetratricopeptide repeat domain"/>
    <property type="match status" value="3"/>
</dbReference>
<dbReference type="InterPro" id="IPR002885">
    <property type="entry name" value="Pentatricopeptide_rpt"/>
</dbReference>
<dbReference type="InterPro" id="IPR033443">
    <property type="entry name" value="PROP1-like_PPR_dom"/>
</dbReference>
<dbReference type="InterPro" id="IPR011990">
    <property type="entry name" value="TPR-like_helical_dom_sf"/>
</dbReference>
<dbReference type="NCBIfam" id="TIGR00756">
    <property type="entry name" value="PPR"/>
    <property type="match status" value="1"/>
</dbReference>
<dbReference type="PANTHER" id="PTHR24014">
    <property type="entry name" value="2-OXOGLUTARATE AND IRON-DEPENDENT OXYGENASE DOMAIN-CONTAINING PROTEIN 2"/>
    <property type="match status" value="1"/>
</dbReference>
<dbReference type="PANTHER" id="PTHR24014:SF6">
    <property type="entry name" value="PENTATRICOPEPTIDE REPEAT-CONTAINING PROTEIN 1, MITOCHONDRIAL"/>
    <property type="match status" value="1"/>
</dbReference>
<dbReference type="Pfam" id="PF13812">
    <property type="entry name" value="PPR_3"/>
    <property type="match status" value="1"/>
</dbReference>
<dbReference type="Pfam" id="PF17177">
    <property type="entry name" value="PPR_long"/>
    <property type="match status" value="1"/>
</dbReference>
<dbReference type="PROSITE" id="PS51375">
    <property type="entry name" value="PPR"/>
    <property type="match status" value="7"/>
</dbReference>
<proteinExistence type="evidence at transcript level"/>
<reference key="1">
    <citation type="submission" date="2004-11" db="EMBL/GenBank/DDBJ databases">
        <authorList>
            <consortium name="The German cDNA consortium"/>
        </authorList>
    </citation>
    <scope>NUCLEOTIDE SEQUENCE [LARGE SCALE MRNA]</scope>
    <source>
        <tissue>Brain cortex</tissue>
    </source>
</reference>
<accession>Q5R655</accession>
<feature type="chain" id="PRO_0000097091" description="Pentatricopeptide repeat-containing protein 1, mitochondrial">
    <location>
        <begin position="1"/>
        <end position="698"/>
    </location>
</feature>
<feature type="repeat" description="PPR 1">
    <location>
        <begin position="133"/>
        <end position="169"/>
    </location>
</feature>
<feature type="repeat" description="PPR 2">
    <location>
        <begin position="170"/>
        <end position="204"/>
    </location>
</feature>
<feature type="repeat" description="PPR 3">
    <location>
        <begin position="205"/>
        <end position="243"/>
    </location>
</feature>
<feature type="repeat" description="PPR 4">
    <location>
        <begin position="244"/>
        <end position="278"/>
    </location>
</feature>
<feature type="repeat" description="PPR 5">
    <location>
        <begin position="279"/>
        <end position="315"/>
    </location>
</feature>
<feature type="repeat" description="PPR 6">
    <location>
        <begin position="316"/>
        <end position="352"/>
    </location>
</feature>
<feature type="repeat" description="PPR 7">
    <location>
        <begin position="517"/>
        <end position="551"/>
    </location>
</feature>
<feature type="repeat" description="PPR 8">
    <location>
        <begin position="552"/>
        <end position="583"/>
    </location>
</feature>
<feature type="repeat" description="PPR 9">
    <location>
        <begin position="584"/>
        <end position="618"/>
    </location>
</feature>
<feature type="region of interest" description="Disordered" evidence="2">
    <location>
        <begin position="49"/>
        <end position="88"/>
    </location>
</feature>
<feature type="region of interest" description="Disordered" evidence="2">
    <location>
        <begin position="392"/>
        <end position="419"/>
    </location>
</feature>
<feature type="region of interest" description="Disordered" evidence="2">
    <location>
        <begin position="670"/>
        <end position="698"/>
    </location>
</feature>
<feature type="compositionally biased region" description="Polar residues" evidence="2">
    <location>
        <begin position="62"/>
        <end position="78"/>
    </location>
</feature>
<feature type="compositionally biased region" description="Basic and acidic residues" evidence="2">
    <location>
        <begin position="678"/>
        <end position="690"/>
    </location>
</feature>
<sequence>MDFVRLARLFSRARPMGLFILQHLDPCRARWAGGREGLMRPVWAPFGSSSSQLPLGQERQENTGSLGSDPSHSNSTATQEEDEEESFGALSDKYSSRRLFRKSTAQFHNLRFGERRDEQTKPEPKLWRGQRNTPYWYFLQCKRLIKEGKLVEALDLFERQMLKEERLQPMESNYTALIGGCGRVGYLKKAFSLYNQMKKRDLEPSDATYTALFNVCAESPWKDSALQSALKLRQQLQAKNFELNLKTYHALLKMAAKCADLRMCLDVFKEIIHKGHVVTEETFSFLLMGCIQDKKTGFRYALQVWRLMLSLGLQPSRDSYNLLLVAARDCGLGDPQVASELLLKPREEATVLQPPVSRQQPRRTAQAKAGNLMSAMLHVEALERQLFLETSQALGPPEPPEARVPSKAQPEVDTKAEPSHTAALTPVALKPPPLELEVNLLTPGAVPPTVVSFGTVTTPADRLALVGGLEGFLSKMAEHRQQPDIRTLTLLAEVVESGSPAESLLLALLDEHQVEADLTFFNTLVRKKSKLGDLEGAKALLPVLAKRGLVPNLQTFCNLAIGCHRPKDGLQLLTDMKKSQVTPNSHIYSALINAAVRKLNYTYLINILKDMKQNRVPVNEVVIRQLEFAAQYPPTFDRYQGKNTYLEKIDGFRAYYKQWLTVMPAEETPHPWQKFRTKPQEDQDTRKEADDGCALGGR</sequence>
<protein>
    <recommendedName>
        <fullName>Pentatricopeptide repeat-containing protein 1, mitochondrial</fullName>
    </recommendedName>
</protein>
<gene>
    <name type="primary">PTCD1</name>
</gene>